<reference key="1">
    <citation type="journal article" date="1999" name="Nature">
        <title>Sequence and analysis of chromosome 4 of the plant Arabidopsis thaliana.</title>
        <authorList>
            <person name="Mayer K.F.X."/>
            <person name="Schueller C."/>
            <person name="Wambutt R."/>
            <person name="Murphy G."/>
            <person name="Volckaert G."/>
            <person name="Pohl T."/>
            <person name="Duesterhoeft A."/>
            <person name="Stiekema W."/>
            <person name="Entian K.-D."/>
            <person name="Terryn N."/>
            <person name="Harris B."/>
            <person name="Ansorge W."/>
            <person name="Brandt P."/>
            <person name="Grivell L.A."/>
            <person name="Rieger M."/>
            <person name="Weichselgartner M."/>
            <person name="de Simone V."/>
            <person name="Obermaier B."/>
            <person name="Mache R."/>
            <person name="Mueller M."/>
            <person name="Kreis M."/>
            <person name="Delseny M."/>
            <person name="Puigdomenech P."/>
            <person name="Watson M."/>
            <person name="Schmidtheini T."/>
            <person name="Reichert B."/>
            <person name="Portetelle D."/>
            <person name="Perez-Alonso M."/>
            <person name="Boutry M."/>
            <person name="Bancroft I."/>
            <person name="Vos P."/>
            <person name="Hoheisel J."/>
            <person name="Zimmermann W."/>
            <person name="Wedler H."/>
            <person name="Ridley P."/>
            <person name="Langham S.-A."/>
            <person name="McCullagh B."/>
            <person name="Bilham L."/>
            <person name="Robben J."/>
            <person name="van der Schueren J."/>
            <person name="Grymonprez B."/>
            <person name="Chuang Y.-J."/>
            <person name="Vandenbussche F."/>
            <person name="Braeken M."/>
            <person name="Weltjens I."/>
            <person name="Voet M."/>
            <person name="Bastiaens I."/>
            <person name="Aert R."/>
            <person name="Defoor E."/>
            <person name="Weitzenegger T."/>
            <person name="Bothe G."/>
            <person name="Ramsperger U."/>
            <person name="Hilbert H."/>
            <person name="Braun M."/>
            <person name="Holzer E."/>
            <person name="Brandt A."/>
            <person name="Peters S."/>
            <person name="van Staveren M."/>
            <person name="Dirkse W."/>
            <person name="Mooijman P."/>
            <person name="Klein Lankhorst R."/>
            <person name="Rose M."/>
            <person name="Hauf J."/>
            <person name="Koetter P."/>
            <person name="Berneiser S."/>
            <person name="Hempel S."/>
            <person name="Feldpausch M."/>
            <person name="Lamberth S."/>
            <person name="Van den Daele H."/>
            <person name="De Keyser A."/>
            <person name="Buysshaert C."/>
            <person name="Gielen J."/>
            <person name="Villarroel R."/>
            <person name="De Clercq R."/>
            <person name="van Montagu M."/>
            <person name="Rogers J."/>
            <person name="Cronin A."/>
            <person name="Quail M.A."/>
            <person name="Bray-Allen S."/>
            <person name="Clark L."/>
            <person name="Doggett J."/>
            <person name="Hall S."/>
            <person name="Kay M."/>
            <person name="Lennard N."/>
            <person name="McLay K."/>
            <person name="Mayes R."/>
            <person name="Pettett A."/>
            <person name="Rajandream M.A."/>
            <person name="Lyne M."/>
            <person name="Benes V."/>
            <person name="Rechmann S."/>
            <person name="Borkova D."/>
            <person name="Bloecker H."/>
            <person name="Scharfe M."/>
            <person name="Grimm M."/>
            <person name="Loehnert T.-H."/>
            <person name="Dose S."/>
            <person name="de Haan M."/>
            <person name="Maarse A.C."/>
            <person name="Schaefer M."/>
            <person name="Mueller-Auer S."/>
            <person name="Gabel C."/>
            <person name="Fuchs M."/>
            <person name="Fartmann B."/>
            <person name="Granderath K."/>
            <person name="Dauner D."/>
            <person name="Herzl A."/>
            <person name="Neumann S."/>
            <person name="Argiriou A."/>
            <person name="Vitale D."/>
            <person name="Liguori R."/>
            <person name="Piravandi E."/>
            <person name="Massenet O."/>
            <person name="Quigley F."/>
            <person name="Clabauld G."/>
            <person name="Muendlein A."/>
            <person name="Felber R."/>
            <person name="Schnabl S."/>
            <person name="Hiller R."/>
            <person name="Schmidt W."/>
            <person name="Lecharny A."/>
            <person name="Aubourg S."/>
            <person name="Chefdor F."/>
            <person name="Cooke R."/>
            <person name="Berger C."/>
            <person name="Monfort A."/>
            <person name="Casacuberta E."/>
            <person name="Gibbons T."/>
            <person name="Weber N."/>
            <person name="Vandenbol M."/>
            <person name="Bargues M."/>
            <person name="Terol J."/>
            <person name="Torres A."/>
            <person name="Perez-Perez A."/>
            <person name="Purnelle B."/>
            <person name="Bent E."/>
            <person name="Johnson S."/>
            <person name="Tacon D."/>
            <person name="Jesse T."/>
            <person name="Heijnen L."/>
            <person name="Schwarz S."/>
            <person name="Scholler P."/>
            <person name="Heber S."/>
            <person name="Francs P."/>
            <person name="Bielke C."/>
            <person name="Frishman D."/>
            <person name="Haase D."/>
            <person name="Lemcke K."/>
            <person name="Mewes H.-W."/>
            <person name="Stocker S."/>
            <person name="Zaccaria P."/>
            <person name="Bevan M."/>
            <person name="Wilson R.K."/>
            <person name="de la Bastide M."/>
            <person name="Habermann K."/>
            <person name="Parnell L."/>
            <person name="Dedhia N."/>
            <person name="Gnoj L."/>
            <person name="Schutz K."/>
            <person name="Huang E."/>
            <person name="Spiegel L."/>
            <person name="Sekhon M."/>
            <person name="Murray J."/>
            <person name="Sheet P."/>
            <person name="Cordes M."/>
            <person name="Abu-Threideh J."/>
            <person name="Stoneking T."/>
            <person name="Kalicki J."/>
            <person name="Graves T."/>
            <person name="Harmon G."/>
            <person name="Edwards J."/>
            <person name="Latreille P."/>
            <person name="Courtney L."/>
            <person name="Cloud J."/>
            <person name="Abbott A."/>
            <person name="Scott K."/>
            <person name="Johnson D."/>
            <person name="Minx P."/>
            <person name="Bentley D."/>
            <person name="Fulton B."/>
            <person name="Miller N."/>
            <person name="Greco T."/>
            <person name="Kemp K."/>
            <person name="Kramer J."/>
            <person name="Fulton L."/>
            <person name="Mardis E."/>
            <person name="Dante M."/>
            <person name="Pepin K."/>
            <person name="Hillier L.W."/>
            <person name="Nelson J."/>
            <person name="Spieth J."/>
            <person name="Ryan E."/>
            <person name="Andrews S."/>
            <person name="Geisel C."/>
            <person name="Layman D."/>
            <person name="Du H."/>
            <person name="Ali J."/>
            <person name="Berghoff A."/>
            <person name="Jones K."/>
            <person name="Drone K."/>
            <person name="Cotton M."/>
            <person name="Joshu C."/>
            <person name="Antonoiu B."/>
            <person name="Zidanic M."/>
            <person name="Strong C."/>
            <person name="Sun H."/>
            <person name="Lamar B."/>
            <person name="Yordan C."/>
            <person name="Ma P."/>
            <person name="Zhong J."/>
            <person name="Preston R."/>
            <person name="Vil D."/>
            <person name="Shekher M."/>
            <person name="Matero A."/>
            <person name="Shah R."/>
            <person name="Swaby I.K."/>
            <person name="O'Shaughnessy A."/>
            <person name="Rodriguez M."/>
            <person name="Hoffman J."/>
            <person name="Till S."/>
            <person name="Granat S."/>
            <person name="Shohdy N."/>
            <person name="Hasegawa A."/>
            <person name="Hameed A."/>
            <person name="Lodhi M."/>
            <person name="Johnson A."/>
            <person name="Chen E."/>
            <person name="Marra M.A."/>
            <person name="Martienssen R."/>
            <person name="McCombie W.R."/>
        </authorList>
    </citation>
    <scope>NUCLEOTIDE SEQUENCE [LARGE SCALE GENOMIC DNA]</scope>
    <source>
        <strain>cv. Columbia</strain>
    </source>
</reference>
<reference key="2">
    <citation type="journal article" date="2017" name="Plant J.">
        <title>Araport11: a complete reannotation of the Arabidopsis thaliana reference genome.</title>
        <authorList>
            <person name="Cheng C.Y."/>
            <person name="Krishnakumar V."/>
            <person name="Chan A.P."/>
            <person name="Thibaud-Nissen F."/>
            <person name="Schobel S."/>
            <person name="Town C.D."/>
        </authorList>
    </citation>
    <scope>GENOME REANNOTATION</scope>
    <source>
        <strain>cv. Columbia</strain>
    </source>
</reference>
<reference key="3">
    <citation type="submission" date="2002-03" db="EMBL/GenBank/DDBJ databases">
        <title>Full-length cDNA from Arabidopsis thaliana.</title>
        <authorList>
            <person name="Brover V.V."/>
            <person name="Troukhan M.E."/>
            <person name="Alexandrov N.A."/>
            <person name="Lu Y.-P."/>
            <person name="Flavell R.B."/>
            <person name="Feldmann K.A."/>
        </authorList>
    </citation>
    <scope>NUCLEOTIDE SEQUENCE [LARGE SCALE MRNA]</scope>
</reference>
<reference key="4">
    <citation type="journal article" date="2006" name="Photosyn. Res.">
        <title>Plant methionine sulfoxide reductase A and B multigenic families.</title>
        <authorList>
            <person name="Rouhier N."/>
            <person name="Vieira Dos Santos C."/>
            <person name="Tarrago L."/>
            <person name="Rey P."/>
        </authorList>
    </citation>
    <scope>GENE FAMILY</scope>
    <scope>NOMENCLATURE</scope>
</reference>
<evidence type="ECO:0000250" key="1"/>
<evidence type="ECO:0000255" key="2">
    <source>
        <dbReference type="PROSITE-ProRule" id="PRU01126"/>
    </source>
</evidence>
<evidence type="ECO:0000305" key="3"/>
<comment type="function">
    <text evidence="1">Catalyzes the reduction of methionine sulfoxide (MetSO) to methionine in proteins. Plays a protective role against oxidative stress by restoring activity to proteins that have been inactivated by methionine oxidation. MSRB family specifically reduces the MetSO R-enantiomer (By similarity).</text>
</comment>
<comment type="catalytic activity">
    <reaction>
        <text>L-methionyl-[protein] + [thioredoxin]-disulfide + H2O = L-methionyl-(R)-S-oxide-[protein] + [thioredoxin]-dithiol</text>
        <dbReference type="Rhea" id="RHEA:24164"/>
        <dbReference type="Rhea" id="RHEA-COMP:10698"/>
        <dbReference type="Rhea" id="RHEA-COMP:10700"/>
        <dbReference type="Rhea" id="RHEA-COMP:12313"/>
        <dbReference type="Rhea" id="RHEA-COMP:12314"/>
        <dbReference type="ChEBI" id="CHEBI:15377"/>
        <dbReference type="ChEBI" id="CHEBI:16044"/>
        <dbReference type="ChEBI" id="CHEBI:29950"/>
        <dbReference type="ChEBI" id="CHEBI:45764"/>
        <dbReference type="ChEBI" id="CHEBI:50058"/>
        <dbReference type="EC" id="1.8.4.12"/>
    </reaction>
</comment>
<comment type="cofactor">
    <cofactor evidence="1">
        <name>Zn(2+)</name>
        <dbReference type="ChEBI" id="CHEBI:29105"/>
    </cofactor>
    <text evidence="1">Binds 1 zinc ion per subunit.</text>
</comment>
<comment type="subcellular location">
    <subcellularLocation>
        <location evidence="3">Cytoplasm</location>
        <location evidence="3">Cytosol</location>
    </subcellularLocation>
</comment>
<comment type="similarity">
    <text evidence="3">Belongs to the MsrB Met sulfoxide reductase family.</text>
</comment>
<comment type="sequence caution" evidence="3">
    <conflict type="erroneous initiation">
        <sequence resource="EMBL-CDS" id="AAM62541"/>
    </conflict>
    <text>Truncated N-terminus.</text>
</comment>
<gene>
    <name type="primary">MSRB8</name>
    <name type="ordered locus">At4g21840</name>
    <name type="ORF">T8O5.50</name>
</gene>
<protein>
    <recommendedName>
        <fullName>Peptide methionine sulfoxide reductase B8</fullName>
        <shortName>AtMSRB8</shortName>
        <ecNumber>1.8.4.12</ecNumber>
    </recommendedName>
    <alternativeName>
        <fullName>Peptide-methionine (R)-S-oxide reductase</fullName>
    </alternativeName>
</protein>
<proteinExistence type="evidence at transcript level"/>
<keyword id="KW-0963">Cytoplasm</keyword>
<keyword id="KW-1015">Disulfide bond</keyword>
<keyword id="KW-0249">Electron transport</keyword>
<keyword id="KW-0479">Metal-binding</keyword>
<keyword id="KW-0560">Oxidoreductase</keyword>
<keyword id="KW-0676">Redox-active center</keyword>
<keyword id="KW-1185">Reference proteome</keyword>
<keyword id="KW-0813">Transport</keyword>
<keyword id="KW-0862">Zinc</keyword>
<feature type="chain" id="PRO_0000395526" description="Peptide methionine sulfoxide reductase B8">
    <location>
        <begin position="1"/>
        <end position="143"/>
    </location>
</feature>
<feature type="domain" description="MsrB" evidence="2">
    <location>
        <begin position="18"/>
        <end position="139"/>
    </location>
</feature>
<feature type="active site" description="Nucleophile" evidence="2">
    <location>
        <position position="128"/>
    </location>
</feature>
<feature type="binding site" evidence="2">
    <location>
        <position position="57"/>
    </location>
    <ligand>
        <name>Zn(2+)</name>
        <dbReference type="ChEBI" id="CHEBI:29105"/>
    </ligand>
</feature>
<feature type="binding site" evidence="2">
    <location>
        <position position="60"/>
    </location>
    <ligand>
        <name>Zn(2+)</name>
        <dbReference type="ChEBI" id="CHEBI:29105"/>
    </ligand>
</feature>
<feature type="binding site" evidence="2">
    <location>
        <position position="103"/>
    </location>
    <ligand>
        <name>Zn(2+)</name>
        <dbReference type="ChEBI" id="CHEBI:29105"/>
    </ligand>
</feature>
<feature type="binding site" evidence="2">
    <location>
        <position position="106"/>
    </location>
    <ligand>
        <name>Zn(2+)</name>
        <dbReference type="ChEBI" id="CHEBI:29105"/>
    </ligand>
</feature>
<feature type="disulfide bond" description="Redox-active" evidence="1">
    <location>
        <begin position="75"/>
        <end position="128"/>
    </location>
</feature>
<accession>O49707</accession>
<accession>Q8LEP4</accession>
<sequence>MAMTAAAVPSSGSFQKQDEEWRAVLSPEQFRVLRLKGTDKRGKGEFTKKFEEGTYSCAGCGTALYKSTTKFDSGCGWPAFFDAIPGAIKQTPEAGGRRMEITCAVCDGHLGHVFKGEGYSTPTDQRHCVNSVSLKFASADSSK</sequence>
<name>MSRB8_ARATH</name>
<organism>
    <name type="scientific">Arabidopsis thaliana</name>
    <name type="common">Mouse-ear cress</name>
    <dbReference type="NCBI Taxonomy" id="3702"/>
    <lineage>
        <taxon>Eukaryota</taxon>
        <taxon>Viridiplantae</taxon>
        <taxon>Streptophyta</taxon>
        <taxon>Embryophyta</taxon>
        <taxon>Tracheophyta</taxon>
        <taxon>Spermatophyta</taxon>
        <taxon>Magnoliopsida</taxon>
        <taxon>eudicotyledons</taxon>
        <taxon>Gunneridae</taxon>
        <taxon>Pentapetalae</taxon>
        <taxon>rosids</taxon>
        <taxon>malvids</taxon>
        <taxon>Brassicales</taxon>
        <taxon>Brassicaceae</taxon>
        <taxon>Camelineae</taxon>
        <taxon>Arabidopsis</taxon>
    </lineage>
</organism>
<dbReference type="EC" id="1.8.4.12"/>
<dbReference type="EMBL" id="AL021890">
    <property type="protein sequence ID" value="CAA17151.1"/>
    <property type="molecule type" value="Genomic_DNA"/>
</dbReference>
<dbReference type="EMBL" id="AL161556">
    <property type="protein sequence ID" value="CAB79139.1"/>
    <property type="molecule type" value="Genomic_DNA"/>
</dbReference>
<dbReference type="EMBL" id="CP002687">
    <property type="protein sequence ID" value="AEE84510.1"/>
    <property type="molecule type" value="Genomic_DNA"/>
</dbReference>
<dbReference type="EMBL" id="AY085310">
    <property type="protein sequence ID" value="AAM62541.1"/>
    <property type="status" value="ALT_INIT"/>
    <property type="molecule type" value="mRNA"/>
</dbReference>
<dbReference type="PIR" id="T05466">
    <property type="entry name" value="T05466"/>
</dbReference>
<dbReference type="RefSeq" id="NP_193915.1">
    <property type="nucleotide sequence ID" value="NM_118304.5"/>
</dbReference>
<dbReference type="SMR" id="O49707"/>
<dbReference type="FunCoup" id="O49707">
    <property type="interactions" value="27"/>
</dbReference>
<dbReference type="STRING" id="3702.O49707"/>
<dbReference type="PaxDb" id="3702-AT4G21840.1"/>
<dbReference type="ProteomicsDB" id="239013"/>
<dbReference type="EnsemblPlants" id="AT4G21840.1">
    <property type="protein sequence ID" value="AT4G21840.1"/>
    <property type="gene ID" value="AT4G21840"/>
</dbReference>
<dbReference type="GeneID" id="828272"/>
<dbReference type="Gramene" id="AT4G21840.1">
    <property type="protein sequence ID" value="AT4G21840.1"/>
    <property type="gene ID" value="AT4G21840"/>
</dbReference>
<dbReference type="KEGG" id="ath:AT4G21840"/>
<dbReference type="Araport" id="AT4G21840"/>
<dbReference type="TAIR" id="AT4G21840">
    <property type="gene designation" value="MSRB8"/>
</dbReference>
<dbReference type="eggNOG" id="KOG0856">
    <property type="taxonomic scope" value="Eukaryota"/>
</dbReference>
<dbReference type="HOGENOM" id="CLU_031040_8_1_1"/>
<dbReference type="InParanoid" id="O49707"/>
<dbReference type="OMA" id="RIQFESP"/>
<dbReference type="OrthoDB" id="44061at2759"/>
<dbReference type="PhylomeDB" id="O49707"/>
<dbReference type="PRO" id="PR:O49707"/>
<dbReference type="Proteomes" id="UP000006548">
    <property type="component" value="Chromosome 4"/>
</dbReference>
<dbReference type="ExpressionAtlas" id="O49707">
    <property type="expression patterns" value="baseline and differential"/>
</dbReference>
<dbReference type="GO" id="GO:0005829">
    <property type="term" value="C:cytosol"/>
    <property type="evidence" value="ECO:0007669"/>
    <property type="project" value="UniProtKB-SubCell"/>
</dbReference>
<dbReference type="GO" id="GO:0046872">
    <property type="term" value="F:metal ion binding"/>
    <property type="evidence" value="ECO:0007669"/>
    <property type="project" value="UniProtKB-KW"/>
</dbReference>
<dbReference type="GO" id="GO:0033743">
    <property type="term" value="F:peptide-methionine (R)-S-oxide reductase activity"/>
    <property type="evidence" value="ECO:0007669"/>
    <property type="project" value="UniProtKB-EC"/>
</dbReference>
<dbReference type="GO" id="GO:0030091">
    <property type="term" value="P:protein repair"/>
    <property type="evidence" value="ECO:0007669"/>
    <property type="project" value="InterPro"/>
</dbReference>
<dbReference type="GO" id="GO:0006979">
    <property type="term" value="P:response to oxidative stress"/>
    <property type="evidence" value="ECO:0007669"/>
    <property type="project" value="InterPro"/>
</dbReference>
<dbReference type="FunFam" id="2.170.150.20:FF:000009">
    <property type="entry name" value="Peptide-methionine (R)-S-oxide reductase"/>
    <property type="match status" value="1"/>
</dbReference>
<dbReference type="Gene3D" id="2.170.150.20">
    <property type="entry name" value="Peptide methionine sulfoxide reductase"/>
    <property type="match status" value="1"/>
</dbReference>
<dbReference type="InterPro" id="IPR028427">
    <property type="entry name" value="Met_Sox_Rdtase_MsrB"/>
</dbReference>
<dbReference type="InterPro" id="IPR002579">
    <property type="entry name" value="Met_Sox_Rdtase_MsrB_dom"/>
</dbReference>
<dbReference type="InterPro" id="IPR011057">
    <property type="entry name" value="Mss4-like_sf"/>
</dbReference>
<dbReference type="NCBIfam" id="TIGR00357">
    <property type="entry name" value="peptide-methionine (R)-S-oxide reductase MsrB"/>
    <property type="match status" value="1"/>
</dbReference>
<dbReference type="PANTHER" id="PTHR46081">
    <property type="entry name" value="PEPTIDE METHIONINE SULFOXIDE REDUCTASE 2"/>
    <property type="match status" value="1"/>
</dbReference>
<dbReference type="PANTHER" id="PTHR46081:SF3">
    <property type="entry name" value="PEPTIDE METHIONINE SULFOXIDE REDUCTASE B7-RELATED"/>
    <property type="match status" value="1"/>
</dbReference>
<dbReference type="Pfam" id="PF01641">
    <property type="entry name" value="SelR"/>
    <property type="match status" value="1"/>
</dbReference>
<dbReference type="SUPFAM" id="SSF51316">
    <property type="entry name" value="Mss4-like"/>
    <property type="match status" value="1"/>
</dbReference>
<dbReference type="PROSITE" id="PS51790">
    <property type="entry name" value="MSRB"/>
    <property type="match status" value="1"/>
</dbReference>